<comment type="function">
    <text evidence="1">Serine/threonine protein kinase involved in both mRNA surveillance and genotoxic stress response pathways. Recognizes the substrate consensus sequence [ST]-Q. Plays a central role in nonsense-mediated decay (NMD) of mRNAs containing premature stop codons by phosphorylating UPF1/RENT1. Recruited by release factors to stalled ribosomes together with SMG8 and SMG9 (forming the SMG1C protein kinase complex), and UPF1 to form the transient SURF (SMG1-UPF1-eRF1-eRF3) complex. In EJC-dependent NMD, the SURF complex associates with the exon junction complex (EJC) through UPF2 and allows the formation of an UPF1-UPF2-UPF3 surveillance complex which is believed to activate NMD. Also acts as a genotoxic stress-activated protein kinase that displays some functional overlap with ATM. Can phosphorylate p53/TP53 and is required for optimal p53/TP53 activation after cellular exposure to genotoxic stress. Its depletion leads to spontaneous DNA damage and increased sensitivity to ionizing radiation (IR). May activate PRKCI but not PRKCZ (By similarity).</text>
</comment>
<comment type="catalytic activity">
    <reaction>
        <text>L-seryl-[protein] + ATP = O-phospho-L-seryl-[protein] + ADP + H(+)</text>
        <dbReference type="Rhea" id="RHEA:17989"/>
        <dbReference type="Rhea" id="RHEA-COMP:9863"/>
        <dbReference type="Rhea" id="RHEA-COMP:11604"/>
        <dbReference type="ChEBI" id="CHEBI:15378"/>
        <dbReference type="ChEBI" id="CHEBI:29999"/>
        <dbReference type="ChEBI" id="CHEBI:30616"/>
        <dbReference type="ChEBI" id="CHEBI:83421"/>
        <dbReference type="ChEBI" id="CHEBI:456216"/>
        <dbReference type="EC" id="2.7.11.1"/>
    </reaction>
</comment>
<comment type="catalytic activity">
    <reaction>
        <text>L-threonyl-[protein] + ATP = O-phospho-L-threonyl-[protein] + ADP + H(+)</text>
        <dbReference type="Rhea" id="RHEA:46608"/>
        <dbReference type="Rhea" id="RHEA-COMP:11060"/>
        <dbReference type="Rhea" id="RHEA-COMP:11605"/>
        <dbReference type="ChEBI" id="CHEBI:15378"/>
        <dbReference type="ChEBI" id="CHEBI:30013"/>
        <dbReference type="ChEBI" id="CHEBI:30616"/>
        <dbReference type="ChEBI" id="CHEBI:61977"/>
        <dbReference type="ChEBI" id="CHEBI:456216"/>
        <dbReference type="EC" id="2.7.11.1"/>
    </reaction>
</comment>
<comment type="cofactor">
    <cofactor evidence="1">
        <name>Mn(2+)</name>
        <dbReference type="ChEBI" id="CHEBI:29035"/>
    </cofactor>
</comment>
<comment type="activity regulation">
    <text>Inhibited by caffeine, LY294002 and wortmannin.</text>
</comment>
<comment type="subunit">
    <text evidence="2">Component of the SMG1C complex composed of SMG1, SMG8 and SMG9; the recruitment of SMG8 to SMG1 N-terminus induces a large conformational change in the SMG1 C-terminal head domain containing the catalytic domain. Component of the transient SURF (SMG1-UPF1-eRF1-eRF3) complex. Part of a complex composed of SMG1, DHX34 and UPF1; within the complex DHX34 acts as a scaffolding protein to facilitate SMG1 phosphorylation of UPF1 (By similarity). Interacts with PRKCI. Interacts with TELO2 and TTI1. Interacts with RUVBL1 and RUVBL2. Interacts with DHX34 (via C-terminus); the interaction is RNA-independent (By similarity).</text>
</comment>
<comment type="subcellular location">
    <subcellularLocation>
        <location evidence="2">Nucleus</location>
    </subcellularLocation>
    <subcellularLocation>
        <location evidence="2">Cytoplasm</location>
    </subcellularLocation>
    <text evidence="7">Present in the chromatoid body.</text>
</comment>
<comment type="alternative products">
    <event type="alternative splicing"/>
    <isoform>
        <id>Q8BKX6-1</id>
        <name>1</name>
        <sequence type="displayed"/>
    </isoform>
    <isoform>
        <id>Q8BKX6-2</id>
        <name>2</name>
        <sequence type="described" ref="VSP_017749 VSP_017750"/>
    </isoform>
    <isoform>
        <id>Q8BKX6-3</id>
        <name>3</name>
        <sequence type="described" ref="VSP_017751 VSP_017752"/>
    </isoform>
</comment>
<comment type="PTM">
    <text evidence="2">Autophosphorylated.</text>
</comment>
<comment type="similarity">
    <text evidence="10">Belongs to the PI3/PI4-kinase family.</text>
</comment>
<comment type="sequence caution" evidence="10">
    <conflict type="erroneous initiation">
        <sequence resource="EMBL-CDS" id="BAD90238"/>
    </conflict>
    <text>Extended N-terminus.</text>
</comment>
<sequence>MSRRAPGSRLSSGGGGTKYPRSWNDWQPRTDSASADPDTLKYSSSRDRGVSSSYGLQPSNSAVVSRQRHDDTRGHADIQNDEKGGYSVNGGSGENTYGRKSLGQELRINNVTSPEFTSVQHGSRALATKDMRKSQERSMSYSDESRLSNLLRRITREDDRDRRLATVKQLKEFIQQPENKLVLVKQLDNILAAVHDVLNESSKLLQELRQEGACCLGLLCASLSYEAEKIFKWIFSKFSSSAKDEVKLLYLCATYRALETVGEKKAFSSVMQLVMTSLQSILENVDTPELLCKCVKCILLVARCYPHIFSTNFRDTVDILVGWHIDHTQKPSLTQQVSGWLQSLEPFWVADLAFSTTLLGQFLEDMEAYAEDLSHVASGESVDEDVPPPSVSLPKLAALLRVFSTVVRSIGERFSPIRGPPITEAYVTDVLYRVMRCVTAANQVFFSEAVLTAANECVGVLLGSLDPSMTIHCDMVITYGLDQLENCQTCGTDYIISVLNLLTLIVEQINTKLPSSFVEKLFIPSSKLLFLRYHKEKEVVAVAHAVYQAVLSLKNIPVLETAYKLILGEMTCALNNLLHSLQLPDACSEIKHEAFQNHVFNIDNANFVVIFDLSALTTIGNAKNSLIGMWALSPTVFALLSKNLMIVHSDLAVHFPAIQYAVLYTLYSHCTRHDHFISSSLSSSSPSLFDGAVISTVTTATKKHFSIILNLLGILLKKDNLNQDTRKLLMTWALEVAVLMKKSETYAPLFSLPSFHKFSKGLLANTLVEDVNICLQACSSLHALSSSLPDDLLQRCVDVCRVQLVHSGTRIRQAFGKLLKSIPLDVVLSNNNHTEIQEISLALRSHMSKAPSNTFHPQDFSDVISFILYGNSHRTGKDNWLERLFYSCQRLDKRDQSTIPRNLLKTDAVLWQWAIWEAAQFTVLSKLRTPLGRAQDTFQTIEGIIRSLAAHTLNPDQDVSQWTTADNDEGHGSNQLRLVLLLQYLENLEKLMYNAYEGCANALTSPPKVIRTFFYTNRQTCQDWLTRIRLSIMRVGLLAGQPAVTVRHGFDLLTEMKTNSLTQGSELEVTIMMVVEALCELHCPEAIQGIAVWSSSAVGKNLLWINSVAQQAEGRFEKASVEYQEHLCAMTGVDCCISSFDKSVLTLANAGRNSASPKHSLNGESRKTVLSKSIDSSPEVISYLGNKACECYISIADWAAVQEWQNAVHDLKKNSSSTSLNLKADFNYIKSLSSFESGEFVECTEQLELLPGENINLLAGGSKEKIDMKKLLPNMLSPDPRELQKSIEVQLLRSSVFLATALNHMEQDQKWQSLTENVVKYLKQTSRIAIGPLRLSTLTVSQSLPVLSTLQLYCSSALENTVSNRLSTEDCLIPLFSDALRSCKQHDVRPWMQALRYTMYQNQLLEKIKEQTVPIRSHLMELGLTAAKFARKRGNVSLATRLLAQCSEVQLGKTTTAQDLVQHFKKLSTQGQVDEKWGPELDIEKTKLLYTAGQSTHAMEMLSSCAISFCKSAKAEYAVAKSILTLAKWVQAEWKEISGQLRQVYRAQQQQNLSGLSTLSRNILALIELPSANTVGEEHPRIESESTVHIGVGEPDFILGQLYHLSSVQAPEVAKSWAALASWAYRWGRKVVDNASQGEGVRLLPREKSEVQNLLPDTITEEEKERIYGILGQAVCRPAGIQDEDITLQITESEDNEDDDMVDVIWRQLISSCPWLSELDENATEGVIKVWRKVVDRIFSLYKLSCSAYFTFLKLNAGQVLLDEDDPRLHLSHRAEQSTDDVIVMATLRLLRLLVKHAGELRQYLEHGLETTPTAPWRGIIPQLFSRLNHPEVYVRQSICNLLCRVAQDSPHLILYPAIVGTISLSSESQASGNKYSSAIPTLLGNIQGEELLVSECEGGSPPASQDSNKDEPKSGLNEDQAMMQDCYSKIVDKLSSANPTMVLQVQMLVAELRRVTVLWDELWLGVLLQQHMYVLRRIQQLEDEVKRVQNNNTLRKEEKIAIMREKHTALMKPIVFALEHVRSITAAPAETPHEKWFQDNYGDAIDNALEKLKTPSNPAKPGSSWIPFKEIMLSLQQRAQKRASYILRLDEISPWLAAMTNTEIALPGEVSARDTVTIHSVGGTITILPTKTKPKKLLFLGSDGKSYPYLFKGLEDLHLDERIMQFLSIVNTMFATINRQETPRFHARHYSVTPLGTRSGLIQWVDGATPLFGLYKRWQQREAALQAQKAQDSYQTPQNPSIVPRPSELYYSKIGPALKTVGLSLDVSRRDWPLHVMKAVLEELMEATPPNLLAKELWSSCTTPDEWWRVTQSYARSTAVMSMVGYIIGLGDRHLDNVLIDMTTGEVVHIDYNVCFEKGKSLRVPEKVPFRMTQNIETALGVTGVEGVFRLSCEQVLHIMRRGRETLLTLLEAFVYDPLVDWTAGGEAGFAGAVYGGGGQQAESKQSKREMEREITRSLFSSRVAEIKVNWFKNRDEMLVVLPKLDSSLDEYLSLQEQLTDVEKLQGKLLEEIEFLEGAEGVDHPSHTLQHRYSEHTQLQTQQRAVQEAIQVKLNEFEQWITHYQAAFNNLEATQLASLLQEISTQMDLGPPSYVPATAFLQNAGQAHLISQCEQLEGEVGALLQQRRSVLRGCLEQLHHYATVALQYPKAIFQKHRIEQWKAWMEELICNTTVERCQELYRKYEMQYAPQPPPTVCQFITATEMTLQRYAADINSRLIRQVERLKQEAVTVPVCEDQLKEIERCIKVFLHENGEEGSLSLASVIISALCTLTRRNLMMEGAASSAGEQLVDLTSRDGAWFLEELCSMSGNVTCLVQLLKQCHLVPQDLDIPNPVEASEAVHLANGVYTSLQELNSNFRQIIFPEALRCLMKGECTLESMLHELDSLIEQTTDGVPLQTLVESLQAYLRNTAMGLEEETHAHYIDVARMLHAQYGELIQPRNGSVDETPKMSAGQMLLVAFDGMFAQVETAFGLLVEKLNKMEIPVAWRKIDIIREARSTQVNFFDDDNHRQVLEEIFFLKRLQTIKEFFRLCGTFSKTLSGSSSLEDQNTVNGPVQIVNVKTLFRNSCFSEDQMAKPIKAFTADFVRQLLIGLPNQALGLTLCSFISALGVDIIAQVEAKDFGAESKVSVDDLCKKAVEHNIQVGKFSQLVMNRATVLASSYDTAWKKHDLVRRLETSISSCKTSLQRVQLHIAMFQWQHEDLLISRPQAMSVTPPRSAILTSMKKKLHALSQIETSIGTVQEKLAALEASIEQRLKWAGGANPALAPVLQDFEATIAERRNLVLKESQRANQVTFLCSNIIHFESLRTRTAEALSLDAALFELIKRCQQMCSFASQFNSSVSELELRLLQRVDTTLEHPIGSSEWLLSAHKQLTQDMSTQRAVQTEKEQQIETVCETIQSLVDSVKTVLTGHNRQLGDVKHLLKAMAKDEEAALADAEDIPYESSVRQFLAEYKSWQDNIQTVLFTLVQAMGQVRSQEHVEMLQEITPTLKELKTQSQSIYNNLVSFASPLVTDAANECSSPTSSATYQPSFAAAVRSNTGQKTQPDVMSQNAKKLIQKNLATSADTPPSTIPGTGKSIACSPKKAVRDPKTGKAVQERNSYAVSVWKRVKAKLEGRDVDPNRRMSVAEQVDYVIKEATNLDNLAQLYEGWTAWV</sequence>
<name>SMG1_MOUSE</name>
<accession>Q8BKX6</accession>
<accession>E9QLR6</accession>
<accession>Q5DU42</accession>
<accession>Q6ZQC0</accession>
<accession>Q8BLU4</accession>
<accession>Q8BWJ5</accession>
<accession>Q8BXD3</accession>
<protein>
    <recommendedName>
        <fullName>Serine/threonine-protein kinase SMG1</fullName>
        <shortName>SMG-1</shortName>
        <ecNumber>2.7.11.1</ecNumber>
    </recommendedName>
    <alternativeName>
        <fullName evidence="2">Lambda/iota protein kinase C-interacting protein</fullName>
        <shortName evidence="2">Lambda-interacting protein</shortName>
    </alternativeName>
    <alternativeName>
        <fullName evidence="11">Nonsense mediated mRNA decay-associated PI3K-related kinase SMG1</fullName>
    </alternativeName>
</protein>
<dbReference type="EC" id="2.7.11.1"/>
<dbReference type="EMBL" id="AC131788">
    <property type="status" value="NOT_ANNOTATED_CDS"/>
    <property type="molecule type" value="Genomic_DNA"/>
</dbReference>
<dbReference type="EMBL" id="AC132432">
    <property type="status" value="NOT_ANNOTATED_CDS"/>
    <property type="molecule type" value="Genomic_DNA"/>
</dbReference>
<dbReference type="EMBL" id="AK129136">
    <property type="protein sequence ID" value="BAC97946.1"/>
    <property type="molecule type" value="mRNA"/>
</dbReference>
<dbReference type="EMBL" id="AK220328">
    <property type="protein sequence ID" value="BAD90238.1"/>
    <property type="status" value="ALT_INIT"/>
    <property type="molecule type" value="mRNA"/>
</dbReference>
<dbReference type="EMBL" id="AK041264">
    <property type="protein sequence ID" value="BAC30884.2"/>
    <property type="molecule type" value="mRNA"/>
</dbReference>
<dbReference type="EMBL" id="AK047829">
    <property type="protein sequence ID" value="BAC33168.2"/>
    <property type="molecule type" value="mRNA"/>
</dbReference>
<dbReference type="EMBL" id="AK049391">
    <property type="protein sequence ID" value="BAC33729.1"/>
    <property type="molecule type" value="mRNA"/>
</dbReference>
<dbReference type="EMBL" id="AK052331">
    <property type="protein sequence ID" value="BAC34941.1"/>
    <property type="molecule type" value="mRNA"/>
</dbReference>
<dbReference type="CCDS" id="CCDS40102.1">
    <molecule id="Q8BKX6-1"/>
</dbReference>
<dbReference type="RefSeq" id="NP_001026984.1">
    <molecule id="Q8BKX6-1"/>
    <property type="nucleotide sequence ID" value="NM_001031814.1"/>
</dbReference>
<dbReference type="SMR" id="Q8BKX6"/>
<dbReference type="BioGRID" id="231444">
    <property type="interactions" value="7"/>
</dbReference>
<dbReference type="FunCoup" id="Q8BKX6">
    <property type="interactions" value="4417"/>
</dbReference>
<dbReference type="STRING" id="10090.ENSMUSP00000032891"/>
<dbReference type="GlyGen" id="Q8BKX6">
    <property type="glycosylation" value="6 sites, 3 N-linked glycans (3 sites), 1 O-linked glycan (1 site)"/>
</dbReference>
<dbReference type="iPTMnet" id="Q8BKX6"/>
<dbReference type="PhosphoSitePlus" id="Q8BKX6"/>
<dbReference type="SwissPalm" id="Q8BKX6"/>
<dbReference type="jPOST" id="Q8BKX6"/>
<dbReference type="PaxDb" id="10090-ENSMUSP00000032891"/>
<dbReference type="PeptideAtlas" id="Q8BKX6"/>
<dbReference type="ProteomicsDB" id="257270">
    <molecule id="Q8BKX6-1"/>
</dbReference>
<dbReference type="ProteomicsDB" id="257271">
    <molecule id="Q8BKX6-2"/>
</dbReference>
<dbReference type="ProteomicsDB" id="257272">
    <molecule id="Q8BKX6-3"/>
</dbReference>
<dbReference type="Pumba" id="Q8BKX6"/>
<dbReference type="Antibodypedia" id="6280">
    <property type="antibodies" value="220 antibodies from 17 providers"/>
</dbReference>
<dbReference type="DNASU" id="233789"/>
<dbReference type="Ensembl" id="ENSMUST00000032891.15">
    <molecule id="Q8BKX6-1"/>
    <property type="protein sequence ID" value="ENSMUSP00000032891.9"/>
    <property type="gene ID" value="ENSMUSG00000030655.16"/>
</dbReference>
<dbReference type="GeneID" id="233789"/>
<dbReference type="KEGG" id="mmu:233789"/>
<dbReference type="UCSC" id="uc009jjp.1">
    <molecule id="Q8BKX6-1"/>
    <property type="organism name" value="mouse"/>
</dbReference>
<dbReference type="UCSC" id="uc009jjq.1">
    <molecule id="Q8BKX6-3"/>
    <property type="organism name" value="mouse"/>
</dbReference>
<dbReference type="UCSC" id="uc009jjr.1">
    <molecule id="Q8BKX6-2"/>
    <property type="organism name" value="mouse"/>
</dbReference>
<dbReference type="AGR" id="MGI:1919742"/>
<dbReference type="CTD" id="23049"/>
<dbReference type="MGI" id="MGI:1919742">
    <property type="gene designation" value="Smg1"/>
</dbReference>
<dbReference type="VEuPathDB" id="HostDB:ENSMUSG00000030655"/>
<dbReference type="eggNOG" id="KOG0891">
    <property type="taxonomic scope" value="Eukaryota"/>
</dbReference>
<dbReference type="GeneTree" id="ENSGT00940000154776"/>
<dbReference type="InParanoid" id="Q8BKX6"/>
<dbReference type="OMA" id="AFECHFT"/>
<dbReference type="OrthoDB" id="10065496at2759"/>
<dbReference type="PhylomeDB" id="Q8BKX6"/>
<dbReference type="TreeFam" id="TF352560"/>
<dbReference type="Reactome" id="R-MMU-975957">
    <property type="pathway name" value="Nonsense Mediated Decay (NMD) enhanced by the Exon Junction Complex (EJC)"/>
</dbReference>
<dbReference type="BioGRID-ORCS" id="233789">
    <property type="hits" value="15 hits in 117 CRISPR screens"/>
</dbReference>
<dbReference type="CD-CODE" id="DE1E139C">
    <property type="entry name" value="Chromatoid body"/>
</dbReference>
<dbReference type="ChiTaRS" id="Smg1">
    <property type="organism name" value="mouse"/>
</dbReference>
<dbReference type="PRO" id="PR:Q8BKX6"/>
<dbReference type="Proteomes" id="UP000000589">
    <property type="component" value="Chromosome 7"/>
</dbReference>
<dbReference type="RNAct" id="Q8BKX6">
    <property type="molecule type" value="protein"/>
</dbReference>
<dbReference type="Bgee" id="ENSMUSG00000030655">
    <property type="expression patterns" value="Expressed in embryonic post-anal tail and 224 other cell types or tissues"/>
</dbReference>
<dbReference type="ExpressionAtlas" id="Q8BKX6">
    <property type="expression patterns" value="baseline and differential"/>
</dbReference>
<dbReference type="GO" id="GO:0033391">
    <property type="term" value="C:chromatoid body"/>
    <property type="evidence" value="ECO:0000314"/>
    <property type="project" value="UniProtKB"/>
</dbReference>
<dbReference type="GO" id="GO:0005654">
    <property type="term" value="C:nucleoplasm"/>
    <property type="evidence" value="ECO:0007669"/>
    <property type="project" value="Ensembl"/>
</dbReference>
<dbReference type="GO" id="GO:0005524">
    <property type="term" value="F:ATP binding"/>
    <property type="evidence" value="ECO:0007669"/>
    <property type="project" value="UniProtKB-KW"/>
</dbReference>
<dbReference type="GO" id="GO:0046872">
    <property type="term" value="F:metal ion binding"/>
    <property type="evidence" value="ECO:0007669"/>
    <property type="project" value="UniProtKB-KW"/>
</dbReference>
<dbReference type="GO" id="GO:0106310">
    <property type="term" value="F:protein serine kinase activity"/>
    <property type="evidence" value="ECO:0007669"/>
    <property type="project" value="RHEA"/>
</dbReference>
<dbReference type="GO" id="GO:0004674">
    <property type="term" value="F:protein serine/threonine kinase activity"/>
    <property type="evidence" value="ECO:0007669"/>
    <property type="project" value="UniProtKB-KW"/>
</dbReference>
<dbReference type="GO" id="GO:0042162">
    <property type="term" value="F:telomeric DNA binding"/>
    <property type="evidence" value="ECO:0007669"/>
    <property type="project" value="Ensembl"/>
</dbReference>
<dbReference type="GO" id="GO:0006281">
    <property type="term" value="P:DNA repair"/>
    <property type="evidence" value="ECO:0007669"/>
    <property type="project" value="UniProtKB-KW"/>
</dbReference>
<dbReference type="GO" id="GO:0000184">
    <property type="term" value="P:nuclear-transcribed mRNA catabolic process, nonsense-mediated decay"/>
    <property type="evidence" value="ECO:0007669"/>
    <property type="project" value="UniProtKB-KW"/>
</dbReference>
<dbReference type="GO" id="GO:0046854">
    <property type="term" value="P:phosphatidylinositol phosphate biosynthetic process"/>
    <property type="evidence" value="ECO:0007669"/>
    <property type="project" value="Ensembl"/>
</dbReference>
<dbReference type="GO" id="GO:0032204">
    <property type="term" value="P:regulation of telomere maintenance"/>
    <property type="evidence" value="ECO:0007669"/>
    <property type="project" value="Ensembl"/>
</dbReference>
<dbReference type="CDD" id="cd05170">
    <property type="entry name" value="PIKKc_SMG1"/>
    <property type="match status" value="1"/>
</dbReference>
<dbReference type="FunFam" id="1.25.10.10:FF:000136">
    <property type="entry name" value="serine/threonine-protein kinase SMG1 isoform X1"/>
    <property type="match status" value="1"/>
</dbReference>
<dbReference type="FunFam" id="3.30.1010.10:FF:000010">
    <property type="entry name" value="serine/threonine-protein kinase SMG1 isoform X1"/>
    <property type="match status" value="1"/>
</dbReference>
<dbReference type="FunFam" id="1.10.1070.11:FF:000008">
    <property type="entry name" value="serine/threonine-protein kinase SMG1 isoform X2"/>
    <property type="match status" value="1"/>
</dbReference>
<dbReference type="Gene3D" id="1.25.10.10">
    <property type="entry name" value="Leucine-rich Repeat Variant"/>
    <property type="match status" value="1"/>
</dbReference>
<dbReference type="Gene3D" id="1.10.1070.11">
    <property type="entry name" value="Phosphatidylinositol 3-/4-kinase, catalytic domain"/>
    <property type="match status" value="1"/>
</dbReference>
<dbReference type="Gene3D" id="3.30.1010.10">
    <property type="entry name" value="Phosphatidylinositol 3-kinase Catalytic Subunit, Chain A, domain 4"/>
    <property type="match status" value="1"/>
</dbReference>
<dbReference type="InterPro" id="IPR011989">
    <property type="entry name" value="ARM-like"/>
</dbReference>
<dbReference type="InterPro" id="IPR016024">
    <property type="entry name" value="ARM-type_fold"/>
</dbReference>
<dbReference type="InterPro" id="IPR050517">
    <property type="entry name" value="DDR_Repair_Kinase"/>
</dbReference>
<dbReference type="InterPro" id="IPR003152">
    <property type="entry name" value="FATC_dom"/>
</dbReference>
<dbReference type="InterPro" id="IPR011009">
    <property type="entry name" value="Kinase-like_dom_sf"/>
</dbReference>
<dbReference type="InterPro" id="IPR000403">
    <property type="entry name" value="PI3/4_kinase_cat_dom"/>
</dbReference>
<dbReference type="InterPro" id="IPR036940">
    <property type="entry name" value="PI3/4_kinase_cat_sf"/>
</dbReference>
<dbReference type="InterPro" id="IPR018936">
    <property type="entry name" value="PI3/4_kinase_CS"/>
</dbReference>
<dbReference type="InterPro" id="IPR014009">
    <property type="entry name" value="PIK_FAT"/>
</dbReference>
<dbReference type="InterPro" id="IPR031559">
    <property type="entry name" value="SMG1"/>
</dbReference>
<dbReference type="InterPro" id="IPR035175">
    <property type="entry name" value="SMG1_N"/>
</dbReference>
<dbReference type="InterPro" id="IPR039414">
    <property type="entry name" value="SMG1_PIKKc"/>
</dbReference>
<dbReference type="PANTHER" id="PTHR11139">
    <property type="entry name" value="ATAXIA TELANGIECTASIA MUTATED ATM -RELATED"/>
    <property type="match status" value="1"/>
</dbReference>
<dbReference type="Pfam" id="PF02260">
    <property type="entry name" value="FATC"/>
    <property type="match status" value="1"/>
</dbReference>
<dbReference type="Pfam" id="PF00454">
    <property type="entry name" value="PI3_PI4_kinase"/>
    <property type="match status" value="1"/>
</dbReference>
<dbReference type="Pfam" id="PF15785">
    <property type="entry name" value="SMG1"/>
    <property type="match status" value="1"/>
</dbReference>
<dbReference type="Pfam" id="PF17229">
    <property type="entry name" value="SMG1_N"/>
    <property type="match status" value="1"/>
</dbReference>
<dbReference type="SMART" id="SM01343">
    <property type="entry name" value="FATC"/>
    <property type="match status" value="1"/>
</dbReference>
<dbReference type="SMART" id="SM00146">
    <property type="entry name" value="PI3Kc"/>
    <property type="match status" value="1"/>
</dbReference>
<dbReference type="SMART" id="SM01345">
    <property type="entry name" value="Rapamycin_bind"/>
    <property type="match status" value="1"/>
</dbReference>
<dbReference type="SUPFAM" id="SSF48371">
    <property type="entry name" value="ARM repeat"/>
    <property type="match status" value="2"/>
</dbReference>
<dbReference type="SUPFAM" id="SSF56112">
    <property type="entry name" value="Protein kinase-like (PK-like)"/>
    <property type="match status" value="1"/>
</dbReference>
<dbReference type="PROSITE" id="PS51189">
    <property type="entry name" value="FAT"/>
    <property type="match status" value="1"/>
</dbReference>
<dbReference type="PROSITE" id="PS51190">
    <property type="entry name" value="FATC"/>
    <property type="match status" value="1"/>
</dbReference>
<dbReference type="PROSITE" id="PS00916">
    <property type="entry name" value="PI3_4_KINASE_2"/>
    <property type="match status" value="1"/>
</dbReference>
<dbReference type="PROSITE" id="PS50290">
    <property type="entry name" value="PI3_4_KINASE_3"/>
    <property type="match status" value="1"/>
</dbReference>
<feature type="chain" id="PRO_0000229792" description="Serine/threonine-protein kinase SMG1">
    <location>
        <begin position="1"/>
        <end position="3658"/>
    </location>
</feature>
<feature type="domain" description="FAT" evidence="4">
    <location>
        <begin position="1281"/>
        <end position="1864"/>
    </location>
</feature>
<feature type="repeat" description="HEAT">
    <location>
        <begin position="1815"/>
        <end position="1850"/>
    </location>
</feature>
<feature type="domain" description="PI3K/PI4K catalytic" evidence="3">
    <location>
        <begin position="2122"/>
        <end position="2461"/>
    </location>
</feature>
<feature type="domain" description="FATC" evidence="4 5">
    <location>
        <begin position="3626"/>
        <end position="3658"/>
    </location>
</feature>
<feature type="region of interest" description="Disordered" evidence="6">
    <location>
        <begin position="1"/>
        <end position="99"/>
    </location>
</feature>
<feature type="region of interest" description="Disordered" evidence="6">
    <location>
        <begin position="116"/>
        <end position="142"/>
    </location>
</feature>
<feature type="region of interest" description="Disordered" evidence="6">
    <location>
        <begin position="1896"/>
        <end position="1917"/>
    </location>
</feature>
<feature type="region of interest" description="G-loop" evidence="3">
    <location>
        <begin position="2128"/>
        <end position="2134"/>
    </location>
</feature>
<feature type="region of interest" description="Catalytic loop" evidence="3">
    <location>
        <begin position="2330"/>
        <end position="2338"/>
    </location>
</feature>
<feature type="region of interest" description="Activation loop" evidence="3">
    <location>
        <begin position="2350"/>
        <end position="2374"/>
    </location>
</feature>
<feature type="region of interest" description="Disordered" evidence="6">
    <location>
        <begin position="3565"/>
        <end position="3588"/>
    </location>
</feature>
<feature type="compositionally biased region" description="Polar residues" evidence="6">
    <location>
        <begin position="24"/>
        <end position="33"/>
    </location>
</feature>
<feature type="compositionally biased region" description="Basic and acidic residues" evidence="6">
    <location>
        <begin position="67"/>
        <end position="84"/>
    </location>
</feature>
<feature type="compositionally biased region" description="Basic and acidic residues" evidence="6">
    <location>
        <begin position="127"/>
        <end position="136"/>
    </location>
</feature>
<feature type="compositionally biased region" description="Polar residues" evidence="6">
    <location>
        <begin position="3565"/>
        <end position="3576"/>
    </location>
</feature>
<feature type="modified residue" description="N6-acetyllysine" evidence="13">
    <location>
        <position position="171"/>
    </location>
</feature>
<feature type="modified residue" description="Phosphothreonine" evidence="2">
    <location>
        <position position="3547"/>
    </location>
</feature>
<feature type="modified residue" description="Phosphoserine" evidence="2">
    <location>
        <position position="3553"/>
    </location>
</feature>
<feature type="modified residue" description="Phosphoserine" evidence="12">
    <location>
        <position position="3567"/>
    </location>
</feature>
<feature type="modified residue" description="Phosphothreonine" evidence="12">
    <location>
        <position position="3570"/>
    </location>
</feature>
<feature type="modified residue" description="Phosphothreonine" evidence="12">
    <location>
        <position position="3574"/>
    </location>
</feature>
<feature type="splice variant" id="VSP_017749" description="In isoform 2." evidence="8">
    <original>LVMTSLQSILEN</original>
    <variation>VRARDPQCSAVR</variation>
    <location>
        <begin position="273"/>
        <end position="284"/>
    </location>
</feature>
<feature type="splice variant" id="VSP_017750" description="In isoform 2." evidence="8">
    <location>
        <begin position="285"/>
        <end position="3658"/>
    </location>
</feature>
<feature type="splice variant" id="VSP_017751" description="In isoform 3." evidence="9">
    <original>LYR</original>
    <variation>SVF</variation>
    <location>
        <begin position="431"/>
        <end position="433"/>
    </location>
</feature>
<feature type="splice variant" id="VSP_017752" description="In isoform 3." evidence="9">
    <location>
        <begin position="434"/>
        <end position="3658"/>
    </location>
</feature>
<feature type="sequence conflict" description="In Ref. 3; BAC33168." evidence="10" ref="3">
    <original>I</original>
    <variation>V</variation>
    <location>
        <position position="566"/>
    </location>
</feature>
<keyword id="KW-0007">Acetylation</keyword>
<keyword id="KW-0025">Alternative splicing</keyword>
<keyword id="KW-0067">ATP-binding</keyword>
<keyword id="KW-0963">Cytoplasm</keyword>
<keyword id="KW-0903">Direct protein sequencing</keyword>
<keyword id="KW-0227">DNA damage</keyword>
<keyword id="KW-0234">DNA repair</keyword>
<keyword id="KW-0418">Kinase</keyword>
<keyword id="KW-0464">Manganese</keyword>
<keyword id="KW-0479">Metal-binding</keyword>
<keyword id="KW-0866">Nonsense-mediated mRNA decay</keyword>
<keyword id="KW-0547">Nucleotide-binding</keyword>
<keyword id="KW-0539">Nucleus</keyword>
<keyword id="KW-0597">Phosphoprotein</keyword>
<keyword id="KW-1185">Reference proteome</keyword>
<keyword id="KW-0723">Serine/threonine-protein kinase</keyword>
<keyword id="KW-0808">Transferase</keyword>
<evidence type="ECO:0000250" key="1"/>
<evidence type="ECO:0000250" key="2">
    <source>
        <dbReference type="UniProtKB" id="Q96Q15"/>
    </source>
</evidence>
<evidence type="ECO:0000255" key="3">
    <source>
        <dbReference type="PROSITE-ProRule" id="PRU00269"/>
    </source>
</evidence>
<evidence type="ECO:0000255" key="4">
    <source>
        <dbReference type="PROSITE-ProRule" id="PRU00534"/>
    </source>
</evidence>
<evidence type="ECO:0000255" key="5">
    <source>
        <dbReference type="PROSITE-ProRule" id="PRU00535"/>
    </source>
</evidence>
<evidence type="ECO:0000256" key="6">
    <source>
        <dbReference type="SAM" id="MobiDB-lite"/>
    </source>
</evidence>
<evidence type="ECO:0000269" key="7">
    <source>
    </source>
</evidence>
<evidence type="ECO:0000303" key="8">
    <source>
    </source>
</evidence>
<evidence type="ECO:0000303" key="9">
    <source>
    </source>
</evidence>
<evidence type="ECO:0000305" key="10"/>
<evidence type="ECO:0000312" key="11">
    <source>
        <dbReference type="MGI" id="MGI:1919742"/>
    </source>
</evidence>
<evidence type="ECO:0007744" key="12">
    <source>
    </source>
</evidence>
<evidence type="ECO:0007744" key="13">
    <source>
    </source>
</evidence>
<organism>
    <name type="scientific">Mus musculus</name>
    <name type="common">Mouse</name>
    <dbReference type="NCBI Taxonomy" id="10090"/>
    <lineage>
        <taxon>Eukaryota</taxon>
        <taxon>Metazoa</taxon>
        <taxon>Chordata</taxon>
        <taxon>Craniata</taxon>
        <taxon>Vertebrata</taxon>
        <taxon>Euteleostomi</taxon>
        <taxon>Mammalia</taxon>
        <taxon>Eutheria</taxon>
        <taxon>Euarchontoglires</taxon>
        <taxon>Glires</taxon>
        <taxon>Rodentia</taxon>
        <taxon>Myomorpha</taxon>
        <taxon>Muroidea</taxon>
        <taxon>Muridae</taxon>
        <taxon>Murinae</taxon>
        <taxon>Mus</taxon>
        <taxon>Mus</taxon>
    </lineage>
</organism>
<reference key="1">
    <citation type="journal article" date="2009" name="PLoS Biol.">
        <title>Lineage-specific biology revealed by a finished genome assembly of the mouse.</title>
        <authorList>
            <person name="Church D.M."/>
            <person name="Goodstadt L."/>
            <person name="Hillier L.W."/>
            <person name="Zody M.C."/>
            <person name="Goldstein S."/>
            <person name="She X."/>
            <person name="Bult C.J."/>
            <person name="Agarwala R."/>
            <person name="Cherry J.L."/>
            <person name="DiCuccio M."/>
            <person name="Hlavina W."/>
            <person name="Kapustin Y."/>
            <person name="Meric P."/>
            <person name="Maglott D."/>
            <person name="Birtle Z."/>
            <person name="Marques A.C."/>
            <person name="Graves T."/>
            <person name="Zhou S."/>
            <person name="Teague B."/>
            <person name="Potamousis K."/>
            <person name="Churas C."/>
            <person name="Place M."/>
            <person name="Herschleb J."/>
            <person name="Runnheim R."/>
            <person name="Forrest D."/>
            <person name="Amos-Landgraf J."/>
            <person name="Schwartz D.C."/>
            <person name="Cheng Z."/>
            <person name="Lindblad-Toh K."/>
            <person name="Eichler E.E."/>
            <person name="Ponting C.P."/>
        </authorList>
    </citation>
    <scope>NUCLEOTIDE SEQUENCE [LARGE SCALE GENOMIC DNA]</scope>
    <source>
        <strain>C57BL/6J</strain>
    </source>
</reference>
<reference key="2">
    <citation type="journal article" date="2003" name="DNA Res.">
        <title>Prediction of the coding sequences of mouse homologues of KIAA gene: III. The complete nucleotide sequences of 500 mouse KIAA-homologous cDNAs identified by screening of terminal sequences of cDNA clones randomly sampled from size-fractionated libraries.</title>
        <authorList>
            <person name="Okazaki N."/>
            <person name="Kikuno R."/>
            <person name="Ohara R."/>
            <person name="Inamoto S."/>
            <person name="Koseki H."/>
            <person name="Hiraoka S."/>
            <person name="Saga Y."/>
            <person name="Nagase T."/>
            <person name="Ohara O."/>
            <person name="Koga H."/>
        </authorList>
    </citation>
    <scope>NUCLEOTIDE SEQUENCE [LARGE SCALE MRNA] (ISOFORM 2)</scope>
    <scope>NUCLEOTIDE SEQUENCE [LARGE SCALE MRNA] OF 2976-3658</scope>
    <source>
        <tissue>Fetal brain</tissue>
    </source>
</reference>
<reference key="3">
    <citation type="journal article" date="2005" name="Science">
        <title>The transcriptional landscape of the mammalian genome.</title>
        <authorList>
            <person name="Carninci P."/>
            <person name="Kasukawa T."/>
            <person name="Katayama S."/>
            <person name="Gough J."/>
            <person name="Frith M.C."/>
            <person name="Maeda N."/>
            <person name="Oyama R."/>
            <person name="Ravasi T."/>
            <person name="Lenhard B."/>
            <person name="Wells C."/>
            <person name="Kodzius R."/>
            <person name="Shimokawa K."/>
            <person name="Bajic V.B."/>
            <person name="Brenner S.E."/>
            <person name="Batalov S."/>
            <person name="Forrest A.R."/>
            <person name="Zavolan M."/>
            <person name="Davis M.J."/>
            <person name="Wilming L.G."/>
            <person name="Aidinis V."/>
            <person name="Allen J.E."/>
            <person name="Ambesi-Impiombato A."/>
            <person name="Apweiler R."/>
            <person name="Aturaliya R.N."/>
            <person name="Bailey T.L."/>
            <person name="Bansal M."/>
            <person name="Baxter L."/>
            <person name="Beisel K.W."/>
            <person name="Bersano T."/>
            <person name="Bono H."/>
            <person name="Chalk A.M."/>
            <person name="Chiu K.P."/>
            <person name="Choudhary V."/>
            <person name="Christoffels A."/>
            <person name="Clutterbuck D.R."/>
            <person name="Crowe M.L."/>
            <person name="Dalla E."/>
            <person name="Dalrymple B.P."/>
            <person name="de Bono B."/>
            <person name="Della Gatta G."/>
            <person name="di Bernardo D."/>
            <person name="Down T."/>
            <person name="Engstrom P."/>
            <person name="Fagiolini M."/>
            <person name="Faulkner G."/>
            <person name="Fletcher C.F."/>
            <person name="Fukushima T."/>
            <person name="Furuno M."/>
            <person name="Futaki S."/>
            <person name="Gariboldi M."/>
            <person name="Georgii-Hemming P."/>
            <person name="Gingeras T.R."/>
            <person name="Gojobori T."/>
            <person name="Green R.E."/>
            <person name="Gustincich S."/>
            <person name="Harbers M."/>
            <person name="Hayashi Y."/>
            <person name="Hensch T.K."/>
            <person name="Hirokawa N."/>
            <person name="Hill D."/>
            <person name="Huminiecki L."/>
            <person name="Iacono M."/>
            <person name="Ikeo K."/>
            <person name="Iwama A."/>
            <person name="Ishikawa T."/>
            <person name="Jakt M."/>
            <person name="Kanapin A."/>
            <person name="Katoh M."/>
            <person name="Kawasawa Y."/>
            <person name="Kelso J."/>
            <person name="Kitamura H."/>
            <person name="Kitano H."/>
            <person name="Kollias G."/>
            <person name="Krishnan S.P."/>
            <person name="Kruger A."/>
            <person name="Kummerfeld S.K."/>
            <person name="Kurochkin I.V."/>
            <person name="Lareau L.F."/>
            <person name="Lazarevic D."/>
            <person name="Lipovich L."/>
            <person name="Liu J."/>
            <person name="Liuni S."/>
            <person name="McWilliam S."/>
            <person name="Madan Babu M."/>
            <person name="Madera M."/>
            <person name="Marchionni L."/>
            <person name="Matsuda H."/>
            <person name="Matsuzawa S."/>
            <person name="Miki H."/>
            <person name="Mignone F."/>
            <person name="Miyake S."/>
            <person name="Morris K."/>
            <person name="Mottagui-Tabar S."/>
            <person name="Mulder N."/>
            <person name="Nakano N."/>
            <person name="Nakauchi H."/>
            <person name="Ng P."/>
            <person name="Nilsson R."/>
            <person name="Nishiguchi S."/>
            <person name="Nishikawa S."/>
            <person name="Nori F."/>
            <person name="Ohara O."/>
            <person name="Okazaki Y."/>
            <person name="Orlando V."/>
            <person name="Pang K.C."/>
            <person name="Pavan W.J."/>
            <person name="Pavesi G."/>
            <person name="Pesole G."/>
            <person name="Petrovsky N."/>
            <person name="Piazza S."/>
            <person name="Reed J."/>
            <person name="Reid J.F."/>
            <person name="Ring B.Z."/>
            <person name="Ringwald M."/>
            <person name="Rost B."/>
            <person name="Ruan Y."/>
            <person name="Salzberg S.L."/>
            <person name="Sandelin A."/>
            <person name="Schneider C."/>
            <person name="Schoenbach C."/>
            <person name="Sekiguchi K."/>
            <person name="Semple C.A."/>
            <person name="Seno S."/>
            <person name="Sessa L."/>
            <person name="Sheng Y."/>
            <person name="Shibata Y."/>
            <person name="Shimada H."/>
            <person name="Shimada K."/>
            <person name="Silva D."/>
            <person name="Sinclair B."/>
            <person name="Sperling S."/>
            <person name="Stupka E."/>
            <person name="Sugiura K."/>
            <person name="Sultana R."/>
            <person name="Takenaka Y."/>
            <person name="Taki K."/>
            <person name="Tammoja K."/>
            <person name="Tan S.L."/>
            <person name="Tang S."/>
            <person name="Taylor M.S."/>
            <person name="Tegner J."/>
            <person name="Teichmann S.A."/>
            <person name="Ueda H.R."/>
            <person name="van Nimwegen E."/>
            <person name="Verardo R."/>
            <person name="Wei C.L."/>
            <person name="Yagi K."/>
            <person name="Yamanishi H."/>
            <person name="Zabarovsky E."/>
            <person name="Zhu S."/>
            <person name="Zimmer A."/>
            <person name="Hide W."/>
            <person name="Bult C."/>
            <person name="Grimmond S.M."/>
            <person name="Teasdale R.D."/>
            <person name="Liu E.T."/>
            <person name="Brusic V."/>
            <person name="Quackenbush J."/>
            <person name="Wahlestedt C."/>
            <person name="Mattick J.S."/>
            <person name="Hume D.A."/>
            <person name="Kai C."/>
            <person name="Sasaki D."/>
            <person name="Tomaru Y."/>
            <person name="Fukuda S."/>
            <person name="Kanamori-Katayama M."/>
            <person name="Suzuki M."/>
            <person name="Aoki J."/>
            <person name="Arakawa T."/>
            <person name="Iida J."/>
            <person name="Imamura K."/>
            <person name="Itoh M."/>
            <person name="Kato T."/>
            <person name="Kawaji H."/>
            <person name="Kawagashira N."/>
            <person name="Kawashima T."/>
            <person name="Kojima M."/>
            <person name="Kondo S."/>
            <person name="Konno H."/>
            <person name="Nakano K."/>
            <person name="Ninomiya N."/>
            <person name="Nishio T."/>
            <person name="Okada M."/>
            <person name="Plessy C."/>
            <person name="Shibata K."/>
            <person name="Shiraki T."/>
            <person name="Suzuki S."/>
            <person name="Tagami M."/>
            <person name="Waki K."/>
            <person name="Watahiki A."/>
            <person name="Okamura-Oho Y."/>
            <person name="Suzuki H."/>
            <person name="Kawai J."/>
            <person name="Hayashizaki Y."/>
        </authorList>
    </citation>
    <scope>NUCLEOTIDE SEQUENCE [LARGE SCALE MRNA] (ISOFORM 3)</scope>
    <scope>NUCLEOTIDE SEQUENCE [LARGE SCALE MRNA] OF 1-1996 (ISOFORM 1)</scope>
    <source>
        <strain>C57BL/6J</strain>
        <tissue>Aorta</tissue>
        <tissue>Head</tissue>
        <tissue>Heart</tissue>
        <tissue>Vein</tissue>
    </source>
</reference>
<reference key="4">
    <citation type="submission" date="2009-01" db="UniProtKB">
        <authorList>
            <person name="Lubec G."/>
            <person name="Sunyer B."/>
            <person name="Chen W.-Q."/>
        </authorList>
    </citation>
    <scope>PROTEIN SEQUENCE OF 67-73</scope>
    <scope>IDENTIFICATION BY MASS SPECTROMETRY</scope>
    <source>
        <strain>OF1</strain>
        <tissue>Hippocampus</tissue>
    </source>
</reference>
<reference key="5">
    <citation type="journal article" date="2007" name="Proc. Natl. Acad. Sci. U.S.A.">
        <title>Large-scale phosphorylation analysis of mouse liver.</title>
        <authorList>
            <person name="Villen J."/>
            <person name="Beausoleil S.A."/>
            <person name="Gerber S.A."/>
            <person name="Gygi S.P."/>
        </authorList>
    </citation>
    <scope>IDENTIFICATION BY MASS SPECTROMETRY [LARGE SCALE ANALYSIS]</scope>
    <source>
        <tissue>Liver</tissue>
    </source>
</reference>
<reference key="6">
    <citation type="journal article" date="2010" name="Cell">
        <title>A tissue-specific atlas of mouse protein phosphorylation and expression.</title>
        <authorList>
            <person name="Huttlin E.L."/>
            <person name="Jedrychowski M.P."/>
            <person name="Elias J.E."/>
            <person name="Goswami T."/>
            <person name="Rad R."/>
            <person name="Beausoleil S.A."/>
            <person name="Villen J."/>
            <person name="Haas W."/>
            <person name="Sowa M.E."/>
            <person name="Gygi S.P."/>
        </authorList>
    </citation>
    <scope>PHOSPHORYLATION [LARGE SCALE ANALYSIS] AT SER-3567; THR-3570 AND THR-3574</scope>
    <scope>IDENTIFICATION BY MASS SPECTROMETRY [LARGE SCALE ANALYSIS]</scope>
    <source>
        <tissue>Brain</tissue>
        <tissue>Brown adipose tissue</tissue>
        <tissue>Heart</tissue>
        <tissue>Kidney</tissue>
        <tissue>Liver</tissue>
        <tissue>Lung</tissue>
        <tissue>Pancreas</tissue>
        <tissue>Spleen</tissue>
        <tissue>Testis</tissue>
    </source>
</reference>
<reference key="7">
    <citation type="journal article" date="2013" name="Mol. Cell">
        <title>SIRT5-mediated lysine desuccinylation impacts diverse metabolic pathways.</title>
        <authorList>
            <person name="Park J."/>
            <person name="Chen Y."/>
            <person name="Tishkoff D.X."/>
            <person name="Peng C."/>
            <person name="Tan M."/>
            <person name="Dai L."/>
            <person name="Xie Z."/>
            <person name="Zhang Y."/>
            <person name="Zwaans B.M."/>
            <person name="Skinner M.E."/>
            <person name="Lombard D.B."/>
            <person name="Zhao Y."/>
        </authorList>
    </citation>
    <scope>ACETYLATION [LARGE SCALE ANALYSIS] AT LYS-171</scope>
    <scope>IDENTIFICATION BY MASS SPECTROMETRY [LARGE SCALE ANALYSIS]</scope>
    <source>
        <tissue>Embryonic fibroblast</tissue>
    </source>
</reference>
<reference key="8">
    <citation type="journal article" date="2020" name="Sci. Rep.">
        <title>ADAD1 and ADAD2, testis-specific adenosine deaminase domain-containing proteins, are required for male fertility.</title>
        <authorList>
            <person name="Snyder E."/>
            <person name="Chukrallah L."/>
            <person name="Seltzer K."/>
            <person name="Goodwin L."/>
            <person name="Braun R.E."/>
        </authorList>
    </citation>
    <scope>SUBCELLULAR LOCATION</scope>
</reference>
<proteinExistence type="evidence at protein level"/>
<gene>
    <name evidence="11" type="primary">Smg1</name>
    <name evidence="2" type="synonym">Atx</name>
    <name evidence="2" type="synonym">Kiaa0421</name>
    <name evidence="2" type="synonym">Lip</name>
</gene>